<keyword id="KW-0285">Flavoprotein</keyword>
<keyword id="KW-0288">FMN</keyword>
<keyword id="KW-0503">Monooxygenase</keyword>
<keyword id="KW-0560">Oxidoreductase</keyword>
<keyword id="KW-0614">Plasmid</keyword>
<gene>
    <name evidence="4 7" type="primary">camE25-2</name>
</gene>
<dbReference type="EC" id="1.14.14.108" evidence="2"/>
<dbReference type="EMBL" id="AB771747">
    <property type="protein sequence ID" value="BAN13304.1"/>
    <property type="molecule type" value="Genomic_DNA"/>
</dbReference>
<dbReference type="SMR" id="M5AWY0"/>
<dbReference type="BRENDA" id="1.14.14.108">
    <property type="organism ID" value="5092"/>
</dbReference>
<dbReference type="UniPathway" id="UPA00719"/>
<dbReference type="GO" id="GO:0005829">
    <property type="term" value="C:cytosol"/>
    <property type="evidence" value="ECO:0007669"/>
    <property type="project" value="TreeGrafter"/>
</dbReference>
<dbReference type="GO" id="GO:0018684">
    <property type="term" value="F:2,5-diketocamphane 1,2-monooxygenase"/>
    <property type="evidence" value="ECO:0007669"/>
    <property type="project" value="RHEA"/>
</dbReference>
<dbReference type="GO" id="GO:0019383">
    <property type="term" value="P:(+)-camphor catabolic process"/>
    <property type="evidence" value="ECO:0007669"/>
    <property type="project" value="UniProtKB-UniPathway"/>
</dbReference>
<dbReference type="Gene3D" id="3.20.20.30">
    <property type="entry name" value="Luciferase-like domain"/>
    <property type="match status" value="1"/>
</dbReference>
<dbReference type="InterPro" id="IPR050766">
    <property type="entry name" value="Bact_Lucif_Oxidored"/>
</dbReference>
<dbReference type="InterPro" id="IPR011251">
    <property type="entry name" value="Luciferase-like_dom"/>
</dbReference>
<dbReference type="InterPro" id="IPR036661">
    <property type="entry name" value="Luciferase-like_sf"/>
</dbReference>
<dbReference type="PANTHER" id="PTHR30137:SF16">
    <property type="entry name" value="BLL0895 PROTEIN"/>
    <property type="match status" value="1"/>
</dbReference>
<dbReference type="PANTHER" id="PTHR30137">
    <property type="entry name" value="LUCIFERASE-LIKE MONOOXYGENASE"/>
    <property type="match status" value="1"/>
</dbReference>
<dbReference type="Pfam" id="PF00296">
    <property type="entry name" value="Bac_luciferase"/>
    <property type="match status" value="1"/>
</dbReference>
<dbReference type="SUPFAM" id="SSF51679">
    <property type="entry name" value="Bacterial luciferase-like"/>
    <property type="match status" value="1"/>
</dbReference>
<sequence>MQAGFFHTPYNLPTRTARQMFDWSLKLAQVCDEAGFADFMIGEHSTLAWENIPCPEIIIGAAAPLTKNIRFAPMAHLLPYHNPASLAIQVGWLSQILEGRYFLGVAPGGHHTDAILHGFEGIGPLQEQMFEALELMEKVWARKPFMEKGKFFQAGFPGPDTMPEYDVEIADNSPWGGREALEIAVTGLTKNSSSLKWAGERNYSPISFFGGHEVMRSHYDTWAAAMQSKGFTPDTSRFRVTREIFIADTDAEARKRAKASGMAKTWEHYLFPIYKKFNLFPGIIADAGLDIDPSQIDMDFLADHVWLCGSPETVKGKIENMIERSGGCGQIIVNSHDNIDNPEPYFESLQRLAQEVLPNVKTS</sequence>
<reference key="1">
    <citation type="journal article" date="2012" name="Appl. Environ. Microbiol.">
        <title>Cloning, Baeyer-Villiger biooxidations, and structures of the camphor pathway 2-oxo-Delta(3)-4,5,5-trimethylcyclopentenylacetyl-coenzyme A monooxygenase of Pseudomonas putida ATCC 17453.</title>
        <authorList>
            <person name="Leisch H."/>
            <person name="Shi R."/>
            <person name="Grosse S."/>
            <person name="Morley K."/>
            <person name="Bergeron H."/>
            <person name="Cygler M."/>
            <person name="Iwaki H."/>
            <person name="Hasegawa Y."/>
            <person name="Lau P.C.K."/>
        </authorList>
    </citation>
    <scope>NUCLEOTIDE SEQUENCE [GENOMIC DNA]</scope>
    <source>
        <strain>ATCC 17453 / DSM 50198 / JCM 6157 / NCIMB 10007 / NRRL B-4067 / Stanier 77 / Biotype A</strain>
        <plasmid>CAM</plasmid>
    </source>
</reference>
<reference key="2">
    <citation type="journal article" date="2013" name="Appl. Environ. Microbiol.">
        <title>Camphor pathway redux: functional recombinant expression of 2,5- and 3,6-diketocamphane monooxygenases of Pseudomonas putida ATCC 17453 with their cognate flavin reductase catalyzing Baeyer-Villiger reactions.</title>
        <authorList>
            <person name="Iwaki H."/>
            <person name="Grosse S."/>
            <person name="Bergeron H."/>
            <person name="Leisch H."/>
            <person name="Morley K."/>
            <person name="Hasegawa Y."/>
            <person name="Lau P.C.K."/>
        </authorList>
    </citation>
    <scope>NUCLEOTIDE SEQUENCE [GENOMIC DNA]</scope>
    <scope>FUNCTION</scope>
    <scope>BVMO ACTIVITY</scope>
    <scope>SUBSTRATE SPECIFICITY</scope>
    <scope>BIOPHYSICOCHEMICAL PROPERTIES</scope>
    <scope>SUBUNIT</scope>
    <source>
        <strain>ATCC 17453 / DSM 50198 / JCM 6157 / NCIMB 10007 / NRRL B-4067 / Stanier 77 / Biotype A</strain>
        <plasmid>CAM</plasmid>
    </source>
</reference>
<accession>M5AWY0</accession>
<protein>
    <recommendedName>
        <fullName evidence="6">2,5-diketocamphane 1,2-monooxygenase 2</fullName>
        <shortName evidence="4">2,5-DKCMO 2</shortName>
        <shortName evidence="4">2,5-diketocamphane monooxygenase 2</shortName>
        <ecNumber evidence="2">1.14.14.108</ecNumber>
    </recommendedName>
    <alternativeName>
        <fullName evidence="4">2,5-diketocamphane 1,2-monooxygenase oxygenating component</fullName>
    </alternativeName>
    <alternativeName>
        <fullName evidence="4">2,5-diketocamphane 1,2-monooxygenase oxygenating subunit</fullName>
    </alternativeName>
    <alternativeName>
        <fullName>Camphor 1,2-monooxygenase</fullName>
    </alternativeName>
    <alternativeName>
        <fullName evidence="4">Type II Baeyer-Villiger monooxygenase</fullName>
        <shortName evidence="4">Type II BVMO</shortName>
    </alternativeName>
</protein>
<geneLocation type="plasmid">
    <name>CAM</name>
</geneLocation>
<proteinExistence type="evidence at protein level"/>
<comment type="function">
    <text evidence="2 3">Involved in the degradation and assimilation of (+)-camphor, which allows P.putida strain NCIMB 10007 to grow on this enantiomer of camphor as the sole carbon source. Catalyzes the FMNH(2)-dependent lactonization of 2,5-diketocamphane via a Baeyer-Villiger oxidation to produce the unstable lactone 5-oxo-1,2-campholide with (R,R) configuration, that presumably undergoes spontaneous hydrolysis to form 2-oxo-Delta(3)-4,5,5-trimethylcyclopentenylacetate (By similarity). Is also able to convert (+)-camphor and norcamphor to the corresponding lactone in vitro. Shows no conversion of (-)-camphor, (+)-fenchone, (-)-fenchone, and (+)-nopinone. Acts on other bicyclic ketones and, to a lesser extent, on some 2- and 4-substituted monocyclic ketones (PubMed:23524667).</text>
</comment>
<comment type="catalytic activity">
    <reaction evidence="2">
        <text>(1R,4R)-bornane-2,5-dione + FMNH2 + O2 = (1R,4R)-5-oxo-1,2-campholide + FMN + H2O + H(+)</text>
        <dbReference type="Rhea" id="RHEA:34415"/>
        <dbReference type="ChEBI" id="CHEBI:15377"/>
        <dbReference type="ChEBI" id="CHEBI:15378"/>
        <dbReference type="ChEBI" id="CHEBI:15379"/>
        <dbReference type="ChEBI" id="CHEBI:15392"/>
        <dbReference type="ChEBI" id="CHEBI:18130"/>
        <dbReference type="ChEBI" id="CHEBI:57618"/>
        <dbReference type="ChEBI" id="CHEBI:58210"/>
        <dbReference type="EC" id="1.14.14.108"/>
    </reaction>
</comment>
<comment type="biophysicochemical properties">
    <phDependence>
        <text evidence="3">Optimum pH is 8.0.</text>
    </phDependence>
</comment>
<comment type="pathway">
    <text evidence="2">Terpene metabolism; (R)-camphor degradation.</text>
</comment>
<comment type="subunit">
    <text evidence="3">Homodimer. Likely forms a loose transient complex with a P.putida flavin reductase that provides the required FMNH(2) to the enzyme.</text>
</comment>
<comment type="similarity">
    <text evidence="5">Belongs to the bacterial luciferase oxidoreductase family.</text>
</comment>
<organism>
    <name type="scientific">Pseudomonas putida</name>
    <name type="common">Arthrobacter siderocapsulatus</name>
    <dbReference type="NCBI Taxonomy" id="303"/>
    <lineage>
        <taxon>Bacteria</taxon>
        <taxon>Pseudomonadati</taxon>
        <taxon>Pseudomonadota</taxon>
        <taxon>Gammaproteobacteria</taxon>
        <taxon>Pseudomonadales</taxon>
        <taxon>Pseudomonadaceae</taxon>
        <taxon>Pseudomonas</taxon>
    </lineage>
</organism>
<feature type="chain" id="PRO_0000444572" description="2,5-diketocamphane 1,2-monooxygenase 2">
    <location>
        <begin position="1"/>
        <end position="363"/>
    </location>
</feature>
<feature type="binding site" evidence="1">
    <location>
        <position position="74"/>
    </location>
    <ligand>
        <name>FMN</name>
        <dbReference type="ChEBI" id="CHEBI:58210"/>
    </ligand>
</feature>
<feature type="binding site" evidence="1">
    <location>
        <begin position="186"/>
        <end position="194"/>
    </location>
    <ligand>
        <name>FMN</name>
        <dbReference type="ChEBI" id="CHEBI:58210"/>
    </ligand>
</feature>
<name>25DK2_PSEPU</name>
<evidence type="ECO:0000250" key="1">
    <source>
        <dbReference type="UniProtKB" id="D7UER1"/>
    </source>
</evidence>
<evidence type="ECO:0000250" key="2">
    <source>
        <dbReference type="UniProtKB" id="Q6STM1"/>
    </source>
</evidence>
<evidence type="ECO:0000269" key="3">
    <source>
    </source>
</evidence>
<evidence type="ECO:0000303" key="4">
    <source>
    </source>
</evidence>
<evidence type="ECO:0000305" key="5"/>
<evidence type="ECO:0000305" key="6">
    <source>
    </source>
</evidence>
<evidence type="ECO:0000312" key="7">
    <source>
        <dbReference type="EMBL" id="BAN13304.1"/>
    </source>
</evidence>